<feature type="chain" id="PRO_0000176243" description="Elongation factor 4">
    <location>
        <begin position="1"/>
        <end position="603"/>
    </location>
</feature>
<feature type="domain" description="tr-type G">
    <location>
        <begin position="7"/>
        <end position="191"/>
    </location>
</feature>
<feature type="binding site" evidence="1">
    <location>
        <begin position="19"/>
        <end position="24"/>
    </location>
    <ligand>
        <name>GTP</name>
        <dbReference type="ChEBI" id="CHEBI:37565"/>
    </ligand>
</feature>
<feature type="binding site" evidence="1">
    <location>
        <begin position="138"/>
        <end position="141"/>
    </location>
    <ligand>
        <name>GTP</name>
        <dbReference type="ChEBI" id="CHEBI:37565"/>
    </ligand>
</feature>
<sequence>MTTVPISNIRNFSIVAHIDHGKSTLADRLIQMTGGLTDREMAGKEQVLDSMDIERERGITIKAQTVRLAYRAKDGKDYIFNLMDTPGHVDFAYEVSRSLAACEGSLLVVDASQGVEAQTLANVYQALDNNHEIVPVLNKVDLPAAEPEKVKQQIEDVIGIDASDAVMISAKTGLGVPDVLEAIVTRLPPPKGDRDATLKALLVDSWYDVYLGVVVLIRVVDGVMKKGSRVRMMGTGAAYDVERVGFFTPKMTQVDELGPGEIGFITAAIKEVADTRVGDTITDDRKPVTEMLPGFKPAIPVVFCGLFPVDADDFETLRAAMGKLRLNDASFSFEMETSAALGFGFRCGFLGLLHLEIIQERLSREFDLNLIATAPSVIYKMKLTDGTELEIHNPVDMPDVVKIEEIQEPWIEATILTPDEYLGSVLKLCQDRRGAQKELTYVGARAMVKYDLPLNEVVFDFYDRLKSVSKGYASFDYHLTDYKPADLVKMQILVNAEPVDALSMLVHRTRAEGRGRAMVEKMKELIPPHMFQIPIQAAIGGKVIARETVRALRKDVTAKCYGGDITRKRKLLEKQKEGKKKMRQFGKVDIPQEAFIAALKVDS</sequence>
<proteinExistence type="inferred from homology"/>
<name>LEPA_BRADU</name>
<comment type="function">
    <text evidence="1">Required for accurate and efficient protein synthesis under certain stress conditions. May act as a fidelity factor of the translation reaction, by catalyzing a one-codon backward translocation of tRNAs on improperly translocated ribosomes. Back-translocation proceeds from a post-translocation (POST) complex to a pre-translocation (PRE) complex, thus giving elongation factor G a second chance to translocate the tRNAs correctly. Binds to ribosomes in a GTP-dependent manner.</text>
</comment>
<comment type="catalytic activity">
    <reaction evidence="1">
        <text>GTP + H2O = GDP + phosphate + H(+)</text>
        <dbReference type="Rhea" id="RHEA:19669"/>
        <dbReference type="ChEBI" id="CHEBI:15377"/>
        <dbReference type="ChEBI" id="CHEBI:15378"/>
        <dbReference type="ChEBI" id="CHEBI:37565"/>
        <dbReference type="ChEBI" id="CHEBI:43474"/>
        <dbReference type="ChEBI" id="CHEBI:58189"/>
        <dbReference type="EC" id="3.6.5.n1"/>
    </reaction>
</comment>
<comment type="subcellular location">
    <subcellularLocation>
        <location evidence="1">Cell inner membrane</location>
        <topology evidence="1">Peripheral membrane protein</topology>
        <orientation evidence="1">Cytoplasmic side</orientation>
    </subcellularLocation>
</comment>
<comment type="similarity">
    <text evidence="1">Belongs to the TRAFAC class translation factor GTPase superfamily. Classic translation factor GTPase family. LepA subfamily.</text>
</comment>
<comment type="sequence caution" evidence="2">
    <conflict type="erroneous initiation">
        <sequence resource="EMBL-CDS" id="BAC53415"/>
    </conflict>
</comment>
<protein>
    <recommendedName>
        <fullName evidence="1">Elongation factor 4</fullName>
        <shortName evidence="1">EF-4</shortName>
        <ecNumber evidence="1">3.6.5.n1</ecNumber>
    </recommendedName>
    <alternativeName>
        <fullName evidence="1">Ribosomal back-translocase LepA</fullName>
    </alternativeName>
</protein>
<gene>
    <name evidence="1" type="primary">lepA</name>
    <name type="ordered locus">blr8150</name>
</gene>
<dbReference type="EC" id="3.6.5.n1" evidence="1"/>
<dbReference type="EMBL" id="BA000040">
    <property type="protein sequence ID" value="BAC53415.1"/>
    <property type="status" value="ALT_INIT"/>
    <property type="molecule type" value="Genomic_DNA"/>
</dbReference>
<dbReference type="RefSeq" id="NP_774790.1">
    <property type="nucleotide sequence ID" value="NC_004463.1"/>
</dbReference>
<dbReference type="RefSeq" id="WP_028175920.1">
    <property type="nucleotide sequence ID" value="NC_004463.1"/>
</dbReference>
<dbReference type="SMR" id="Q89BJ8"/>
<dbReference type="FunCoup" id="Q89BJ8">
    <property type="interactions" value="711"/>
</dbReference>
<dbReference type="STRING" id="224911.AAV28_38445"/>
<dbReference type="EnsemblBacteria" id="BAC53415">
    <property type="protein sequence ID" value="BAC53415"/>
    <property type="gene ID" value="BAC53415"/>
</dbReference>
<dbReference type="GeneID" id="46495061"/>
<dbReference type="KEGG" id="bja:blr8150"/>
<dbReference type="PATRIC" id="fig|224911.44.peg.8321"/>
<dbReference type="eggNOG" id="COG0481">
    <property type="taxonomic scope" value="Bacteria"/>
</dbReference>
<dbReference type="HOGENOM" id="CLU_009995_3_3_5"/>
<dbReference type="InParanoid" id="Q89BJ8"/>
<dbReference type="OrthoDB" id="9802948at2"/>
<dbReference type="Proteomes" id="UP000002526">
    <property type="component" value="Chromosome"/>
</dbReference>
<dbReference type="GO" id="GO:0005886">
    <property type="term" value="C:plasma membrane"/>
    <property type="evidence" value="ECO:0007669"/>
    <property type="project" value="UniProtKB-SubCell"/>
</dbReference>
<dbReference type="GO" id="GO:0005525">
    <property type="term" value="F:GTP binding"/>
    <property type="evidence" value="ECO:0007669"/>
    <property type="project" value="UniProtKB-UniRule"/>
</dbReference>
<dbReference type="GO" id="GO:0003924">
    <property type="term" value="F:GTPase activity"/>
    <property type="evidence" value="ECO:0007669"/>
    <property type="project" value="UniProtKB-UniRule"/>
</dbReference>
<dbReference type="GO" id="GO:0097216">
    <property type="term" value="F:guanosine tetraphosphate binding"/>
    <property type="evidence" value="ECO:0007669"/>
    <property type="project" value="UniProtKB-ARBA"/>
</dbReference>
<dbReference type="GO" id="GO:0043022">
    <property type="term" value="F:ribosome binding"/>
    <property type="evidence" value="ECO:0000318"/>
    <property type="project" value="GO_Central"/>
</dbReference>
<dbReference type="GO" id="GO:0003746">
    <property type="term" value="F:translation elongation factor activity"/>
    <property type="evidence" value="ECO:0007669"/>
    <property type="project" value="UniProtKB-UniRule"/>
</dbReference>
<dbReference type="GO" id="GO:0045727">
    <property type="term" value="P:positive regulation of translation"/>
    <property type="evidence" value="ECO:0000318"/>
    <property type="project" value="GO_Central"/>
</dbReference>
<dbReference type="CDD" id="cd03699">
    <property type="entry name" value="EF4_II"/>
    <property type="match status" value="1"/>
</dbReference>
<dbReference type="CDD" id="cd16260">
    <property type="entry name" value="EF4_III"/>
    <property type="match status" value="1"/>
</dbReference>
<dbReference type="CDD" id="cd01890">
    <property type="entry name" value="LepA"/>
    <property type="match status" value="1"/>
</dbReference>
<dbReference type="CDD" id="cd03709">
    <property type="entry name" value="lepA_C"/>
    <property type="match status" value="1"/>
</dbReference>
<dbReference type="FunFam" id="3.40.50.300:FF:000078">
    <property type="entry name" value="Elongation factor 4"/>
    <property type="match status" value="1"/>
</dbReference>
<dbReference type="FunFam" id="2.40.30.10:FF:000015">
    <property type="entry name" value="Translation factor GUF1, mitochondrial"/>
    <property type="match status" value="1"/>
</dbReference>
<dbReference type="FunFam" id="3.30.70.240:FF:000007">
    <property type="entry name" value="Translation factor GUF1, mitochondrial"/>
    <property type="match status" value="1"/>
</dbReference>
<dbReference type="FunFam" id="3.30.70.2570:FF:000001">
    <property type="entry name" value="Translation factor GUF1, mitochondrial"/>
    <property type="match status" value="1"/>
</dbReference>
<dbReference type="FunFam" id="3.30.70.870:FF:000004">
    <property type="entry name" value="Translation factor GUF1, mitochondrial"/>
    <property type="match status" value="1"/>
</dbReference>
<dbReference type="Gene3D" id="3.30.70.240">
    <property type="match status" value="1"/>
</dbReference>
<dbReference type="Gene3D" id="3.30.70.2570">
    <property type="entry name" value="Elongation factor 4, C-terminal domain"/>
    <property type="match status" value="1"/>
</dbReference>
<dbReference type="Gene3D" id="3.30.70.870">
    <property type="entry name" value="Elongation Factor G (Translational Gtpase), domain 3"/>
    <property type="match status" value="1"/>
</dbReference>
<dbReference type="Gene3D" id="3.40.50.300">
    <property type="entry name" value="P-loop containing nucleotide triphosphate hydrolases"/>
    <property type="match status" value="1"/>
</dbReference>
<dbReference type="Gene3D" id="2.40.30.10">
    <property type="entry name" value="Translation factors"/>
    <property type="match status" value="1"/>
</dbReference>
<dbReference type="HAMAP" id="MF_00071">
    <property type="entry name" value="LepA"/>
    <property type="match status" value="1"/>
</dbReference>
<dbReference type="InterPro" id="IPR006297">
    <property type="entry name" value="EF-4"/>
</dbReference>
<dbReference type="InterPro" id="IPR035647">
    <property type="entry name" value="EFG_III/V"/>
</dbReference>
<dbReference type="InterPro" id="IPR000640">
    <property type="entry name" value="EFG_V-like"/>
</dbReference>
<dbReference type="InterPro" id="IPR004161">
    <property type="entry name" value="EFTu-like_2"/>
</dbReference>
<dbReference type="InterPro" id="IPR031157">
    <property type="entry name" value="G_TR_CS"/>
</dbReference>
<dbReference type="InterPro" id="IPR038363">
    <property type="entry name" value="LepA_C_sf"/>
</dbReference>
<dbReference type="InterPro" id="IPR013842">
    <property type="entry name" value="LepA_CTD"/>
</dbReference>
<dbReference type="InterPro" id="IPR035654">
    <property type="entry name" value="LepA_IV"/>
</dbReference>
<dbReference type="InterPro" id="IPR027417">
    <property type="entry name" value="P-loop_NTPase"/>
</dbReference>
<dbReference type="InterPro" id="IPR005225">
    <property type="entry name" value="Small_GTP-bd"/>
</dbReference>
<dbReference type="InterPro" id="IPR000795">
    <property type="entry name" value="T_Tr_GTP-bd_dom"/>
</dbReference>
<dbReference type="NCBIfam" id="TIGR01393">
    <property type="entry name" value="lepA"/>
    <property type="match status" value="1"/>
</dbReference>
<dbReference type="NCBIfam" id="TIGR00231">
    <property type="entry name" value="small_GTP"/>
    <property type="match status" value="1"/>
</dbReference>
<dbReference type="PANTHER" id="PTHR43512:SF4">
    <property type="entry name" value="TRANSLATION FACTOR GUF1 HOMOLOG, CHLOROPLASTIC"/>
    <property type="match status" value="1"/>
</dbReference>
<dbReference type="PANTHER" id="PTHR43512">
    <property type="entry name" value="TRANSLATION FACTOR GUF1-RELATED"/>
    <property type="match status" value="1"/>
</dbReference>
<dbReference type="Pfam" id="PF00679">
    <property type="entry name" value="EFG_C"/>
    <property type="match status" value="1"/>
</dbReference>
<dbReference type="Pfam" id="PF00009">
    <property type="entry name" value="GTP_EFTU"/>
    <property type="match status" value="1"/>
</dbReference>
<dbReference type="Pfam" id="PF03144">
    <property type="entry name" value="GTP_EFTU_D2"/>
    <property type="match status" value="1"/>
</dbReference>
<dbReference type="Pfam" id="PF06421">
    <property type="entry name" value="LepA_C"/>
    <property type="match status" value="1"/>
</dbReference>
<dbReference type="PRINTS" id="PR00315">
    <property type="entry name" value="ELONGATNFCT"/>
</dbReference>
<dbReference type="SMART" id="SM00838">
    <property type="entry name" value="EFG_C"/>
    <property type="match status" value="1"/>
</dbReference>
<dbReference type="SUPFAM" id="SSF54980">
    <property type="entry name" value="EF-G C-terminal domain-like"/>
    <property type="match status" value="2"/>
</dbReference>
<dbReference type="SUPFAM" id="SSF52540">
    <property type="entry name" value="P-loop containing nucleoside triphosphate hydrolases"/>
    <property type="match status" value="1"/>
</dbReference>
<dbReference type="PROSITE" id="PS00301">
    <property type="entry name" value="G_TR_1"/>
    <property type="match status" value="1"/>
</dbReference>
<dbReference type="PROSITE" id="PS51722">
    <property type="entry name" value="G_TR_2"/>
    <property type="match status" value="1"/>
</dbReference>
<accession>Q89BJ8</accession>
<evidence type="ECO:0000255" key="1">
    <source>
        <dbReference type="HAMAP-Rule" id="MF_00071"/>
    </source>
</evidence>
<evidence type="ECO:0000305" key="2"/>
<organism>
    <name type="scientific">Bradyrhizobium diazoefficiens (strain JCM 10833 / BCRC 13528 / IAM 13628 / NBRC 14792 / USDA 110)</name>
    <dbReference type="NCBI Taxonomy" id="224911"/>
    <lineage>
        <taxon>Bacteria</taxon>
        <taxon>Pseudomonadati</taxon>
        <taxon>Pseudomonadota</taxon>
        <taxon>Alphaproteobacteria</taxon>
        <taxon>Hyphomicrobiales</taxon>
        <taxon>Nitrobacteraceae</taxon>
        <taxon>Bradyrhizobium</taxon>
    </lineage>
</organism>
<reference key="1">
    <citation type="journal article" date="2002" name="DNA Res.">
        <title>Complete genomic sequence of nitrogen-fixing symbiotic bacterium Bradyrhizobium japonicum USDA110.</title>
        <authorList>
            <person name="Kaneko T."/>
            <person name="Nakamura Y."/>
            <person name="Sato S."/>
            <person name="Minamisawa K."/>
            <person name="Uchiumi T."/>
            <person name="Sasamoto S."/>
            <person name="Watanabe A."/>
            <person name="Idesawa K."/>
            <person name="Iriguchi M."/>
            <person name="Kawashima K."/>
            <person name="Kohara M."/>
            <person name="Matsumoto M."/>
            <person name="Shimpo S."/>
            <person name="Tsuruoka H."/>
            <person name="Wada T."/>
            <person name="Yamada M."/>
            <person name="Tabata S."/>
        </authorList>
    </citation>
    <scope>NUCLEOTIDE SEQUENCE [LARGE SCALE GENOMIC DNA]</scope>
    <source>
        <strain>JCM 10833 / BCRC 13528 / IAM 13628 / NBRC 14792 / USDA 110</strain>
    </source>
</reference>
<keyword id="KW-0997">Cell inner membrane</keyword>
<keyword id="KW-1003">Cell membrane</keyword>
<keyword id="KW-0342">GTP-binding</keyword>
<keyword id="KW-0378">Hydrolase</keyword>
<keyword id="KW-0472">Membrane</keyword>
<keyword id="KW-0547">Nucleotide-binding</keyword>
<keyword id="KW-0648">Protein biosynthesis</keyword>
<keyword id="KW-1185">Reference proteome</keyword>